<gene>
    <name type="primary">ATJ1</name>
    <name type="synonym">B1</name>
    <name type="ordered locus">At1g28210</name>
    <name type="ORF">F3H9.13</name>
</gene>
<name>DNAJ1_ARATH</name>
<protein>
    <recommendedName>
        <fullName>Chaperone protein dnaJ 1, mitochondrial</fullName>
        <shortName>AtDjB1</shortName>
        <shortName>AtJ1</shortName>
    </recommendedName>
</protein>
<keyword id="KW-0025">Alternative splicing</keyword>
<keyword id="KW-0143">Chaperone</keyword>
<keyword id="KW-0479">Metal-binding</keyword>
<keyword id="KW-0496">Mitochondrion</keyword>
<keyword id="KW-1185">Reference proteome</keyword>
<keyword id="KW-0677">Repeat</keyword>
<keyword id="KW-0809">Transit peptide</keyword>
<keyword id="KW-0862">Zinc</keyword>
<keyword id="KW-0863">Zinc-finger</keyword>
<evidence type="ECO:0000250" key="1"/>
<evidence type="ECO:0000255" key="2"/>
<evidence type="ECO:0000269" key="3">
    <source>
    </source>
</evidence>
<evidence type="ECO:0000305" key="4"/>
<accession>Q38813</accession>
<accession>Q8GXI3</accession>
<accession>Q9FZ94</accession>
<dbReference type="EMBL" id="U16246">
    <property type="protein sequence ID" value="AAB86798.1"/>
    <property type="status" value="ALT_FRAME"/>
    <property type="molecule type" value="mRNA"/>
</dbReference>
<dbReference type="EMBL" id="AC021044">
    <property type="protein sequence ID" value="AAF98434.1"/>
    <property type="status" value="ALT_SEQ"/>
    <property type="molecule type" value="Genomic_DNA"/>
</dbReference>
<dbReference type="EMBL" id="CP002684">
    <property type="protein sequence ID" value="AEE30931.1"/>
    <property type="molecule type" value="Genomic_DNA"/>
</dbReference>
<dbReference type="EMBL" id="AK118226">
    <property type="protein sequence ID" value="BAC42846.1"/>
    <property type="molecule type" value="mRNA"/>
</dbReference>
<dbReference type="PIR" id="B86408">
    <property type="entry name" value="B86408"/>
</dbReference>
<dbReference type="PIR" id="S71190">
    <property type="entry name" value="S71190"/>
</dbReference>
<dbReference type="RefSeq" id="NP_174142.1">
    <property type="nucleotide sequence ID" value="NM_102586.3"/>
</dbReference>
<dbReference type="RefSeq" id="NP_849719.1">
    <molecule id="Q38813-1"/>
    <property type="nucleotide sequence ID" value="NM_179388.2"/>
</dbReference>
<dbReference type="SMR" id="Q38813"/>
<dbReference type="BioGRID" id="24950">
    <property type="interactions" value="1"/>
</dbReference>
<dbReference type="FunCoup" id="Q38813">
    <property type="interactions" value="360"/>
</dbReference>
<dbReference type="STRING" id="3702.Q38813"/>
<dbReference type="PaxDb" id="3702-AT1G28210.2"/>
<dbReference type="ProteomicsDB" id="220711">
    <molecule id="Q38813-1"/>
</dbReference>
<dbReference type="EnsemblPlants" id="AT1G28210.1">
    <molecule id="Q38813-1"/>
    <property type="protein sequence ID" value="AT1G28210.1"/>
    <property type="gene ID" value="AT1G28210"/>
</dbReference>
<dbReference type="GeneID" id="839715"/>
<dbReference type="Gramene" id="AT1G28210.1">
    <molecule id="Q38813-1"/>
    <property type="protein sequence ID" value="AT1G28210.1"/>
    <property type="gene ID" value="AT1G28210"/>
</dbReference>
<dbReference type="KEGG" id="ath:AT1G28210"/>
<dbReference type="Araport" id="AT1G28210"/>
<dbReference type="TAIR" id="AT1G28210">
    <property type="gene designation" value="ATJ1"/>
</dbReference>
<dbReference type="eggNOG" id="KOG0715">
    <property type="taxonomic scope" value="Eukaryota"/>
</dbReference>
<dbReference type="HOGENOM" id="CLU_017633_0_4_1"/>
<dbReference type="InParanoid" id="Q38813"/>
<dbReference type="PhylomeDB" id="Q38813"/>
<dbReference type="PRO" id="PR:Q38813"/>
<dbReference type="Proteomes" id="UP000006548">
    <property type="component" value="Chromosome 1"/>
</dbReference>
<dbReference type="ExpressionAtlas" id="Q38813">
    <property type="expression patterns" value="baseline and differential"/>
</dbReference>
<dbReference type="GO" id="GO:0005739">
    <property type="term" value="C:mitochondrion"/>
    <property type="evidence" value="ECO:0007669"/>
    <property type="project" value="UniProtKB-SubCell"/>
</dbReference>
<dbReference type="GO" id="GO:0005524">
    <property type="term" value="F:ATP binding"/>
    <property type="evidence" value="ECO:0007669"/>
    <property type="project" value="InterPro"/>
</dbReference>
<dbReference type="GO" id="GO:0031072">
    <property type="term" value="F:heat shock protein binding"/>
    <property type="evidence" value="ECO:0007669"/>
    <property type="project" value="InterPro"/>
</dbReference>
<dbReference type="GO" id="GO:0051082">
    <property type="term" value="F:unfolded protein binding"/>
    <property type="evidence" value="ECO:0007669"/>
    <property type="project" value="InterPro"/>
</dbReference>
<dbReference type="GO" id="GO:0008270">
    <property type="term" value="F:zinc ion binding"/>
    <property type="evidence" value="ECO:0007669"/>
    <property type="project" value="UniProtKB-KW"/>
</dbReference>
<dbReference type="GO" id="GO:0006457">
    <property type="term" value="P:protein folding"/>
    <property type="evidence" value="ECO:0007669"/>
    <property type="project" value="InterPro"/>
</dbReference>
<dbReference type="GO" id="GO:0009408">
    <property type="term" value="P:response to heat"/>
    <property type="evidence" value="ECO:0007669"/>
    <property type="project" value="InterPro"/>
</dbReference>
<dbReference type="CDD" id="cd06257">
    <property type="entry name" value="DnaJ"/>
    <property type="match status" value="1"/>
</dbReference>
<dbReference type="CDD" id="cd10747">
    <property type="entry name" value="DnaJ_C"/>
    <property type="match status" value="1"/>
</dbReference>
<dbReference type="CDD" id="cd10719">
    <property type="entry name" value="DnaJ_zf"/>
    <property type="match status" value="1"/>
</dbReference>
<dbReference type="FunFam" id="2.10.230.10:FF:000012">
    <property type="entry name" value="Chaperone protein dnaJ 1, mitochondrial"/>
    <property type="match status" value="1"/>
</dbReference>
<dbReference type="FunFam" id="2.60.260.20:FF:000005">
    <property type="entry name" value="Chaperone protein dnaJ 1, mitochondrial"/>
    <property type="match status" value="1"/>
</dbReference>
<dbReference type="Gene3D" id="1.10.287.110">
    <property type="entry name" value="DnaJ domain"/>
    <property type="match status" value="1"/>
</dbReference>
<dbReference type="Gene3D" id="2.10.230.10">
    <property type="entry name" value="Heat shock protein DnaJ, cysteine-rich domain"/>
    <property type="match status" value="1"/>
</dbReference>
<dbReference type="Gene3D" id="2.60.260.20">
    <property type="entry name" value="Urease metallochaperone UreE, N-terminal domain"/>
    <property type="match status" value="2"/>
</dbReference>
<dbReference type="HAMAP" id="MF_01152">
    <property type="entry name" value="DnaJ"/>
    <property type="match status" value="1"/>
</dbReference>
<dbReference type="InterPro" id="IPR012724">
    <property type="entry name" value="DnaJ"/>
</dbReference>
<dbReference type="InterPro" id="IPR002939">
    <property type="entry name" value="DnaJ_C"/>
</dbReference>
<dbReference type="InterPro" id="IPR001623">
    <property type="entry name" value="DnaJ_domain"/>
</dbReference>
<dbReference type="InterPro" id="IPR018253">
    <property type="entry name" value="DnaJ_domain_CS"/>
</dbReference>
<dbReference type="InterPro" id="IPR008971">
    <property type="entry name" value="HSP40/DnaJ_pept-bd"/>
</dbReference>
<dbReference type="InterPro" id="IPR001305">
    <property type="entry name" value="HSP_DnaJ_Cys-rich_dom"/>
</dbReference>
<dbReference type="InterPro" id="IPR036410">
    <property type="entry name" value="HSP_DnaJ_Cys-rich_dom_sf"/>
</dbReference>
<dbReference type="InterPro" id="IPR036869">
    <property type="entry name" value="J_dom_sf"/>
</dbReference>
<dbReference type="PANTHER" id="PTHR43096:SF36">
    <property type="entry name" value="CHAPERONE PROTEIN DNAJ 1, MITOCHONDRIAL"/>
    <property type="match status" value="1"/>
</dbReference>
<dbReference type="PANTHER" id="PTHR43096">
    <property type="entry name" value="DNAJ HOMOLOG 1, MITOCHONDRIAL-RELATED"/>
    <property type="match status" value="1"/>
</dbReference>
<dbReference type="Pfam" id="PF00226">
    <property type="entry name" value="DnaJ"/>
    <property type="match status" value="1"/>
</dbReference>
<dbReference type="Pfam" id="PF01556">
    <property type="entry name" value="DnaJ_C"/>
    <property type="match status" value="1"/>
</dbReference>
<dbReference type="Pfam" id="PF00684">
    <property type="entry name" value="DnaJ_CXXCXGXG"/>
    <property type="match status" value="1"/>
</dbReference>
<dbReference type="PRINTS" id="PR00625">
    <property type="entry name" value="JDOMAIN"/>
</dbReference>
<dbReference type="SMART" id="SM00271">
    <property type="entry name" value="DnaJ"/>
    <property type="match status" value="1"/>
</dbReference>
<dbReference type="SUPFAM" id="SSF46565">
    <property type="entry name" value="Chaperone J-domain"/>
    <property type="match status" value="1"/>
</dbReference>
<dbReference type="SUPFAM" id="SSF57938">
    <property type="entry name" value="DnaJ/Hsp40 cysteine-rich domain"/>
    <property type="match status" value="1"/>
</dbReference>
<dbReference type="SUPFAM" id="SSF49493">
    <property type="entry name" value="HSP40/DnaJ peptide-binding domain"/>
    <property type="match status" value="2"/>
</dbReference>
<dbReference type="PROSITE" id="PS00636">
    <property type="entry name" value="DNAJ_1"/>
    <property type="match status" value="1"/>
</dbReference>
<dbReference type="PROSITE" id="PS50076">
    <property type="entry name" value="DNAJ_2"/>
    <property type="match status" value="1"/>
</dbReference>
<dbReference type="PROSITE" id="PS51188">
    <property type="entry name" value="ZF_CR"/>
    <property type="match status" value="1"/>
</dbReference>
<proteinExistence type="evidence at transcript level"/>
<comment type="function">
    <text evidence="1">Plays a continuous role in plant development probably in the structural organization of compartments.</text>
</comment>
<comment type="cofactor">
    <cofactor evidence="1">
        <name>Zn(2+)</name>
        <dbReference type="ChEBI" id="CHEBI:29105"/>
    </cofactor>
    <text evidence="1">Binds 2 Zn(2+) ions per monomer.</text>
</comment>
<comment type="subunit">
    <text evidence="1">Homodimer.</text>
</comment>
<comment type="subcellular location">
    <subcellularLocation>
        <location evidence="3">Mitochondrion</location>
    </subcellularLocation>
</comment>
<comment type="alternative products">
    <event type="alternative splicing"/>
    <isoform>
        <id>Q38813-1</id>
        <name>1</name>
        <sequence type="displayed"/>
    </isoform>
    <text>A number of isoforms are produced. According to EST sequences.</text>
</comment>
<comment type="tissue specificity">
    <text evidence="3">Ubiquitous.</text>
</comment>
<comment type="similarity">
    <text evidence="4">Belongs to the DnaJ family. B/II subfamily.</text>
</comment>
<comment type="sequence caution" evidence="4">
    <conflict type="frameshift">
        <sequence resource="EMBL-CDS" id="AAB86798"/>
    </conflict>
</comment>
<comment type="sequence caution" evidence="4">
    <conflict type="erroneous gene model prediction">
        <sequence resource="EMBL-CDS" id="AAF98434"/>
    </conflict>
</comment>
<reference key="1">
    <citation type="journal article" date="1996" name="Plant Mol. Biol.">
        <title>AtJ1, a mitochondrial homologue of the Escherichia coli DnaJ protein.</title>
        <authorList>
            <person name="Kroczynska B."/>
            <person name="Zhou R."/>
            <person name="Wood C."/>
            <person name="Miernyk J.A."/>
        </authorList>
    </citation>
    <scope>NUCLEOTIDE SEQUENCE [MRNA]</scope>
    <scope>TISSUE SPECIFICITY</scope>
    <scope>SUBCELLULAR LOCATION</scope>
    <source>
        <strain>cv. Columbia</strain>
    </source>
</reference>
<reference key="2">
    <citation type="journal article" date="2000" name="Nature">
        <title>Sequence and analysis of chromosome 1 of the plant Arabidopsis thaliana.</title>
        <authorList>
            <person name="Theologis A."/>
            <person name="Ecker J.R."/>
            <person name="Palm C.J."/>
            <person name="Federspiel N.A."/>
            <person name="Kaul S."/>
            <person name="White O."/>
            <person name="Alonso J."/>
            <person name="Altafi H."/>
            <person name="Araujo R."/>
            <person name="Bowman C.L."/>
            <person name="Brooks S.Y."/>
            <person name="Buehler E."/>
            <person name="Chan A."/>
            <person name="Chao Q."/>
            <person name="Chen H."/>
            <person name="Cheuk R.F."/>
            <person name="Chin C.W."/>
            <person name="Chung M.K."/>
            <person name="Conn L."/>
            <person name="Conway A.B."/>
            <person name="Conway A.R."/>
            <person name="Creasy T.H."/>
            <person name="Dewar K."/>
            <person name="Dunn P."/>
            <person name="Etgu P."/>
            <person name="Feldblyum T.V."/>
            <person name="Feng J.-D."/>
            <person name="Fong B."/>
            <person name="Fujii C.Y."/>
            <person name="Gill J.E."/>
            <person name="Goldsmith A.D."/>
            <person name="Haas B."/>
            <person name="Hansen N.F."/>
            <person name="Hughes B."/>
            <person name="Huizar L."/>
            <person name="Hunter J.L."/>
            <person name="Jenkins J."/>
            <person name="Johnson-Hopson C."/>
            <person name="Khan S."/>
            <person name="Khaykin E."/>
            <person name="Kim C.J."/>
            <person name="Koo H.L."/>
            <person name="Kremenetskaia I."/>
            <person name="Kurtz D.B."/>
            <person name="Kwan A."/>
            <person name="Lam B."/>
            <person name="Langin-Hooper S."/>
            <person name="Lee A."/>
            <person name="Lee J.M."/>
            <person name="Lenz C.A."/>
            <person name="Li J.H."/>
            <person name="Li Y.-P."/>
            <person name="Lin X."/>
            <person name="Liu S.X."/>
            <person name="Liu Z.A."/>
            <person name="Luros J.S."/>
            <person name="Maiti R."/>
            <person name="Marziali A."/>
            <person name="Militscher J."/>
            <person name="Miranda M."/>
            <person name="Nguyen M."/>
            <person name="Nierman W.C."/>
            <person name="Osborne B.I."/>
            <person name="Pai G."/>
            <person name="Peterson J."/>
            <person name="Pham P.K."/>
            <person name="Rizzo M."/>
            <person name="Rooney T."/>
            <person name="Rowley D."/>
            <person name="Sakano H."/>
            <person name="Salzberg S.L."/>
            <person name="Schwartz J.R."/>
            <person name="Shinn P."/>
            <person name="Southwick A.M."/>
            <person name="Sun H."/>
            <person name="Tallon L.J."/>
            <person name="Tambunga G."/>
            <person name="Toriumi M.J."/>
            <person name="Town C.D."/>
            <person name="Utterback T."/>
            <person name="Van Aken S."/>
            <person name="Vaysberg M."/>
            <person name="Vysotskaia V.S."/>
            <person name="Walker M."/>
            <person name="Wu D."/>
            <person name="Yu G."/>
            <person name="Fraser C.M."/>
            <person name="Venter J.C."/>
            <person name="Davis R.W."/>
        </authorList>
    </citation>
    <scope>NUCLEOTIDE SEQUENCE [LARGE SCALE GENOMIC DNA]</scope>
    <source>
        <strain>cv. Columbia</strain>
    </source>
</reference>
<reference key="3">
    <citation type="journal article" date="2017" name="Plant J.">
        <title>Araport11: a complete reannotation of the Arabidopsis thaliana reference genome.</title>
        <authorList>
            <person name="Cheng C.Y."/>
            <person name="Krishnakumar V."/>
            <person name="Chan A.P."/>
            <person name="Thibaud-Nissen F."/>
            <person name="Schobel S."/>
            <person name="Town C.D."/>
        </authorList>
    </citation>
    <scope>GENOME REANNOTATION</scope>
    <source>
        <strain>cv. Columbia</strain>
    </source>
</reference>
<reference key="4">
    <citation type="journal article" date="2002" name="Science">
        <title>Functional annotation of a full-length Arabidopsis cDNA collection.</title>
        <authorList>
            <person name="Seki M."/>
            <person name="Narusaka M."/>
            <person name="Kamiya A."/>
            <person name="Ishida J."/>
            <person name="Satou M."/>
            <person name="Sakurai T."/>
            <person name="Nakajima M."/>
            <person name="Enju A."/>
            <person name="Akiyama K."/>
            <person name="Oono Y."/>
            <person name="Muramatsu M."/>
            <person name="Hayashizaki Y."/>
            <person name="Kawai J."/>
            <person name="Carninci P."/>
            <person name="Itoh M."/>
            <person name="Ishii Y."/>
            <person name="Arakawa T."/>
            <person name="Shibata K."/>
            <person name="Shinagawa A."/>
            <person name="Shinozaki K."/>
        </authorList>
    </citation>
    <scope>NUCLEOTIDE SEQUENCE [LARGE SCALE MRNA]</scope>
    <source>
        <strain>cv. Columbia</strain>
    </source>
</reference>
<reference key="5">
    <citation type="journal article" date="2001" name="Cell Stress Chaperones">
        <title>The J-domain proteins of Arabidopsis thaliana: an unexpectedly large and diverse family of chaperones.</title>
        <authorList>
            <person name="Miernyk J.A."/>
        </authorList>
    </citation>
    <scope>GENE FAMILY</scope>
    <scope>NOMENCLATURE</scope>
</reference>
<feature type="transit peptide" description="Mitochondrion" evidence="2">
    <location>
        <begin position="1"/>
        <end position="26"/>
    </location>
</feature>
<feature type="chain" id="PRO_0000007264" description="Chaperone protein dnaJ 1, mitochondrial">
    <location>
        <begin position="27"/>
        <end position="408"/>
    </location>
</feature>
<feature type="domain" description="J">
    <location>
        <begin position="48"/>
        <end position="113"/>
    </location>
</feature>
<feature type="repeat" description="CXXCXGXG motif">
    <location>
        <begin position="186"/>
        <end position="193"/>
    </location>
</feature>
<feature type="repeat" description="CXXCXGXG motif">
    <location>
        <begin position="203"/>
        <end position="210"/>
    </location>
</feature>
<feature type="repeat" description="CXXCXGXG motif">
    <location>
        <begin position="221"/>
        <end position="228"/>
    </location>
</feature>
<feature type="repeat" description="CXXCXGXG motif">
    <location>
        <begin position="235"/>
        <end position="242"/>
    </location>
</feature>
<feature type="zinc finger region" description="CR-type">
    <location>
        <begin position="173"/>
        <end position="247"/>
    </location>
</feature>
<feature type="binding site" evidence="1">
    <location>
        <position position="186"/>
    </location>
    <ligand>
        <name>Zn(2+)</name>
        <dbReference type="ChEBI" id="CHEBI:29105"/>
        <label>1</label>
    </ligand>
</feature>
<feature type="binding site" evidence="1">
    <location>
        <position position="189"/>
    </location>
    <ligand>
        <name>Zn(2+)</name>
        <dbReference type="ChEBI" id="CHEBI:29105"/>
        <label>1</label>
    </ligand>
</feature>
<feature type="binding site" evidence="1">
    <location>
        <position position="203"/>
    </location>
    <ligand>
        <name>Zn(2+)</name>
        <dbReference type="ChEBI" id="CHEBI:29105"/>
        <label>2</label>
    </ligand>
</feature>
<feature type="binding site" evidence="1">
    <location>
        <position position="206"/>
    </location>
    <ligand>
        <name>Zn(2+)</name>
        <dbReference type="ChEBI" id="CHEBI:29105"/>
        <label>2</label>
    </ligand>
</feature>
<feature type="binding site" evidence="1">
    <location>
        <position position="221"/>
    </location>
    <ligand>
        <name>Zn(2+)</name>
        <dbReference type="ChEBI" id="CHEBI:29105"/>
        <label>2</label>
    </ligand>
</feature>
<feature type="binding site" evidence="1">
    <location>
        <position position="224"/>
    </location>
    <ligand>
        <name>Zn(2+)</name>
        <dbReference type="ChEBI" id="CHEBI:29105"/>
        <label>2</label>
    </ligand>
</feature>
<feature type="binding site" evidence="1">
    <location>
        <position position="235"/>
    </location>
    <ligand>
        <name>Zn(2+)</name>
        <dbReference type="ChEBI" id="CHEBI:29105"/>
        <label>1</label>
    </ligand>
</feature>
<feature type="binding site" evidence="1">
    <location>
        <position position="238"/>
    </location>
    <ligand>
        <name>Zn(2+)</name>
        <dbReference type="ChEBI" id="CHEBI:29105"/>
        <label>1</label>
    </ligand>
</feature>
<feature type="sequence conflict" description="In Ref. 4; BAC42846." evidence="4" ref="4">
    <original>N</original>
    <variation>S</variation>
    <location>
        <position position="122"/>
    </location>
</feature>
<feature type="sequence conflict" description="In Ref. 1; AAB86798." evidence="4" ref="1">
    <original>S</original>
    <variation>P</variation>
    <location>
        <position position="147"/>
    </location>
</feature>
<feature type="sequence conflict" description="In Ref. 1; AAB86798." evidence="4" ref="1">
    <original>G</original>
    <variation>A</variation>
    <location>
        <position position="316"/>
    </location>
</feature>
<feature type="sequence conflict" description="In Ref. 1; AAB86798." evidence="4" ref="1">
    <original>G</original>
    <variation>A</variation>
    <location>
        <position position="345"/>
    </location>
</feature>
<organism>
    <name type="scientific">Arabidopsis thaliana</name>
    <name type="common">Mouse-ear cress</name>
    <dbReference type="NCBI Taxonomy" id="3702"/>
    <lineage>
        <taxon>Eukaryota</taxon>
        <taxon>Viridiplantae</taxon>
        <taxon>Streptophyta</taxon>
        <taxon>Embryophyta</taxon>
        <taxon>Tracheophyta</taxon>
        <taxon>Spermatophyta</taxon>
        <taxon>Magnoliopsida</taxon>
        <taxon>eudicotyledons</taxon>
        <taxon>Gunneridae</taxon>
        <taxon>Pentapetalae</taxon>
        <taxon>rosids</taxon>
        <taxon>malvids</taxon>
        <taxon>Brassicales</taxon>
        <taxon>Brassicaceae</taxon>
        <taxon>Camelineae</taxon>
        <taxon>Arabidopsis</taxon>
    </lineage>
</organism>
<sequence length="408" mass="45678">MRRFNWVLRHVQARRTFDSAIGLRQGSQKPLFERYIHATGINNSSARNYYDVLGVSPKATREEIKKSFHELAKKFHPDTNRNNPSAKRKFQEIREAYETLGNSERREEYDKLQYRNSDYVNNDGGDSERFRRAYQSNFSDTFHKIFSEIFENNQIKPDIRVELSLSLSEAAEGCTKRLSFDAYVFCDSCDGLGHPSDAAMSICPTCRGVGRVTIPPFTASCQTCKGTGHIIKEYCMSCRGSGIVEGTKTAELVIPGGVESEATITIVGAGNVSSRTSQPGNLYIKLKVANDSTFTRDGSDIYVDANISFTQAILGGKVVVPTLSGKIQLDIPKGTQPDQLLVLRGKGLPKQGFFVDHGDQYVRFRVNFPTEVNERQRAILEEFAKEEINNELSDSAEGSWLYQKLSTG</sequence>